<sequence length="179" mass="20331">MAKLHDKYQETVSPELVKKFGFTSVMQVPRIEKITLNMGVGEAVADKKVMEHALRDMTAIAGQKPVVTVARKSVAGFKIREGYPIGCKVTLRGERMWEFLERLVDIAIPRIRDFRGMSVKSFDGRGNYAMGVREQIIFPEIEYDKIDKIRGMDIVITTSAKNDEEGRALLEGFNFPFKK</sequence>
<name>RL5_SHEPW</name>
<comment type="function">
    <text evidence="1">This is one of the proteins that bind and probably mediate the attachment of the 5S RNA into the large ribosomal subunit, where it forms part of the central protuberance. In the 70S ribosome it contacts protein S13 of the 30S subunit (bridge B1b), connecting the 2 subunits; this bridge is implicated in subunit movement. Contacts the P site tRNA; the 5S rRNA and some of its associated proteins might help stabilize positioning of ribosome-bound tRNAs.</text>
</comment>
<comment type="subunit">
    <text evidence="1">Part of the 50S ribosomal subunit; part of the 5S rRNA/L5/L18/L25 subcomplex. Contacts the 5S rRNA and the P site tRNA. Forms a bridge to the 30S subunit in the 70S ribosome.</text>
</comment>
<comment type="similarity">
    <text evidence="1">Belongs to the universal ribosomal protein uL5 family.</text>
</comment>
<gene>
    <name evidence="1" type="primary">rplE</name>
    <name type="ordered locus">swp_2023</name>
</gene>
<evidence type="ECO:0000255" key="1">
    <source>
        <dbReference type="HAMAP-Rule" id="MF_01333"/>
    </source>
</evidence>
<evidence type="ECO:0000305" key="2"/>
<proteinExistence type="inferred from homology"/>
<dbReference type="EMBL" id="CP000472">
    <property type="protein sequence ID" value="ACJ28779.1"/>
    <property type="molecule type" value="Genomic_DNA"/>
</dbReference>
<dbReference type="RefSeq" id="WP_020912147.1">
    <property type="nucleotide sequence ID" value="NC_011566.1"/>
</dbReference>
<dbReference type="SMR" id="B8CNE5"/>
<dbReference type="STRING" id="225849.swp_2023"/>
<dbReference type="KEGG" id="swp:swp_2023"/>
<dbReference type="eggNOG" id="COG0094">
    <property type="taxonomic scope" value="Bacteria"/>
</dbReference>
<dbReference type="HOGENOM" id="CLU_061015_2_1_6"/>
<dbReference type="OrthoDB" id="9806626at2"/>
<dbReference type="Proteomes" id="UP000000753">
    <property type="component" value="Chromosome"/>
</dbReference>
<dbReference type="GO" id="GO:1990904">
    <property type="term" value="C:ribonucleoprotein complex"/>
    <property type="evidence" value="ECO:0007669"/>
    <property type="project" value="UniProtKB-KW"/>
</dbReference>
<dbReference type="GO" id="GO:0005840">
    <property type="term" value="C:ribosome"/>
    <property type="evidence" value="ECO:0007669"/>
    <property type="project" value="UniProtKB-KW"/>
</dbReference>
<dbReference type="GO" id="GO:0019843">
    <property type="term" value="F:rRNA binding"/>
    <property type="evidence" value="ECO:0007669"/>
    <property type="project" value="UniProtKB-UniRule"/>
</dbReference>
<dbReference type="GO" id="GO:0003735">
    <property type="term" value="F:structural constituent of ribosome"/>
    <property type="evidence" value="ECO:0007669"/>
    <property type="project" value="InterPro"/>
</dbReference>
<dbReference type="GO" id="GO:0000049">
    <property type="term" value="F:tRNA binding"/>
    <property type="evidence" value="ECO:0007669"/>
    <property type="project" value="UniProtKB-UniRule"/>
</dbReference>
<dbReference type="GO" id="GO:0006412">
    <property type="term" value="P:translation"/>
    <property type="evidence" value="ECO:0007669"/>
    <property type="project" value="UniProtKB-UniRule"/>
</dbReference>
<dbReference type="FunFam" id="3.30.1440.10:FF:000001">
    <property type="entry name" value="50S ribosomal protein L5"/>
    <property type="match status" value="1"/>
</dbReference>
<dbReference type="Gene3D" id="3.30.1440.10">
    <property type="match status" value="1"/>
</dbReference>
<dbReference type="HAMAP" id="MF_01333_B">
    <property type="entry name" value="Ribosomal_uL5_B"/>
    <property type="match status" value="1"/>
</dbReference>
<dbReference type="InterPro" id="IPR002132">
    <property type="entry name" value="Ribosomal_uL5"/>
</dbReference>
<dbReference type="InterPro" id="IPR020930">
    <property type="entry name" value="Ribosomal_uL5_bac-type"/>
</dbReference>
<dbReference type="InterPro" id="IPR031309">
    <property type="entry name" value="Ribosomal_uL5_C"/>
</dbReference>
<dbReference type="InterPro" id="IPR020929">
    <property type="entry name" value="Ribosomal_uL5_CS"/>
</dbReference>
<dbReference type="InterPro" id="IPR022803">
    <property type="entry name" value="Ribosomal_uL5_dom_sf"/>
</dbReference>
<dbReference type="InterPro" id="IPR031310">
    <property type="entry name" value="Ribosomal_uL5_N"/>
</dbReference>
<dbReference type="NCBIfam" id="NF000585">
    <property type="entry name" value="PRK00010.1"/>
    <property type="match status" value="1"/>
</dbReference>
<dbReference type="PANTHER" id="PTHR11994">
    <property type="entry name" value="60S RIBOSOMAL PROTEIN L11-RELATED"/>
    <property type="match status" value="1"/>
</dbReference>
<dbReference type="Pfam" id="PF00281">
    <property type="entry name" value="Ribosomal_L5"/>
    <property type="match status" value="1"/>
</dbReference>
<dbReference type="Pfam" id="PF00673">
    <property type="entry name" value="Ribosomal_L5_C"/>
    <property type="match status" value="1"/>
</dbReference>
<dbReference type="PIRSF" id="PIRSF002161">
    <property type="entry name" value="Ribosomal_L5"/>
    <property type="match status" value="1"/>
</dbReference>
<dbReference type="SUPFAM" id="SSF55282">
    <property type="entry name" value="RL5-like"/>
    <property type="match status" value="1"/>
</dbReference>
<dbReference type="PROSITE" id="PS00358">
    <property type="entry name" value="RIBOSOMAL_L5"/>
    <property type="match status" value="1"/>
</dbReference>
<organism>
    <name type="scientific">Shewanella piezotolerans (strain WP3 / JCM 13877)</name>
    <dbReference type="NCBI Taxonomy" id="225849"/>
    <lineage>
        <taxon>Bacteria</taxon>
        <taxon>Pseudomonadati</taxon>
        <taxon>Pseudomonadota</taxon>
        <taxon>Gammaproteobacteria</taxon>
        <taxon>Alteromonadales</taxon>
        <taxon>Shewanellaceae</taxon>
        <taxon>Shewanella</taxon>
    </lineage>
</organism>
<accession>B8CNE5</accession>
<keyword id="KW-0687">Ribonucleoprotein</keyword>
<keyword id="KW-0689">Ribosomal protein</keyword>
<keyword id="KW-0694">RNA-binding</keyword>
<keyword id="KW-0699">rRNA-binding</keyword>
<keyword id="KW-0820">tRNA-binding</keyword>
<feature type="chain" id="PRO_1000142450" description="Large ribosomal subunit protein uL5">
    <location>
        <begin position="1"/>
        <end position="179"/>
    </location>
</feature>
<reference key="1">
    <citation type="journal article" date="2008" name="PLoS ONE">
        <title>Environmental adaptation: genomic analysis of the piezotolerant and psychrotolerant deep-sea iron reducing bacterium Shewanella piezotolerans WP3.</title>
        <authorList>
            <person name="Wang F."/>
            <person name="Wang J."/>
            <person name="Jian H."/>
            <person name="Zhang B."/>
            <person name="Li S."/>
            <person name="Wang F."/>
            <person name="Zeng X."/>
            <person name="Gao L."/>
            <person name="Bartlett D.H."/>
            <person name="Yu J."/>
            <person name="Hu S."/>
            <person name="Xiao X."/>
        </authorList>
    </citation>
    <scope>NUCLEOTIDE SEQUENCE [LARGE SCALE GENOMIC DNA]</scope>
    <source>
        <strain>WP3 / JCM 13877</strain>
    </source>
</reference>
<protein>
    <recommendedName>
        <fullName evidence="1">Large ribosomal subunit protein uL5</fullName>
    </recommendedName>
    <alternativeName>
        <fullName evidence="2">50S ribosomal protein L5</fullName>
    </alternativeName>
</protein>